<gene>
    <name type="primary">APOC2</name>
</gene>
<sequence length="100" mass="11059">MGSRFLLALFLVLLVLGCEVQAAQQLQQDDPGSPALLDKVQESISSYWDTAKAAAQDLYQKTYLTSVDEKLRDMYSKSSAAMTTYASIFTDQILTLLKGE</sequence>
<accession>P0DUX7</accession>
<keyword id="KW-0162">Chylomicron</keyword>
<keyword id="KW-0345">HDL</keyword>
<keyword id="KW-0427">LDL</keyword>
<keyword id="KW-0442">Lipid degradation</keyword>
<keyword id="KW-0443">Lipid metabolism</keyword>
<keyword id="KW-0445">Lipid transport</keyword>
<keyword id="KW-0964">Secreted</keyword>
<keyword id="KW-0732">Signal</keyword>
<keyword id="KW-0813">Transport</keyword>
<keyword id="KW-0850">VLDL</keyword>
<organism>
    <name type="scientific">Ellobius talpinus</name>
    <name type="common">Northern mole vole</name>
    <dbReference type="NCBI Taxonomy" id="329620"/>
    <lineage>
        <taxon>Eukaryota</taxon>
        <taxon>Metazoa</taxon>
        <taxon>Chordata</taxon>
        <taxon>Craniata</taxon>
        <taxon>Vertebrata</taxon>
        <taxon>Euteleostomi</taxon>
        <taxon>Mammalia</taxon>
        <taxon>Eutheria</taxon>
        <taxon>Euarchontoglires</taxon>
        <taxon>Glires</taxon>
        <taxon>Rodentia</taxon>
        <taxon>Myomorpha</taxon>
        <taxon>Muroidea</taxon>
        <taxon>Cricetidae</taxon>
        <taxon>Arvicolinae</taxon>
        <taxon>Ellobius</taxon>
    </lineage>
</organism>
<protein>
    <recommendedName>
        <fullName>Apolipoprotein C-II</fullName>
        <shortName>Apo-CII</shortName>
        <shortName>ApoC-II</shortName>
    </recommendedName>
    <alternativeName>
        <fullName>Apolipoprotein C2</fullName>
    </alternativeName>
    <component>
        <recommendedName>
            <fullName>Proapolipoprotein C-II</fullName>
            <shortName>ProapoC-II</shortName>
        </recommendedName>
    </component>
</protein>
<comment type="function">
    <text evidence="1">Component of chylomicrons, very low-density lipoproteins (VLDL), low-density lipoproteins (LDL), and high-density lipoproteins (HDL) in plasma. Plays an important role in lipoprotein metabolism as an activator of lipoprotein lipase.</text>
</comment>
<comment type="subcellular location">
    <subcellularLocation>
        <location evidence="1">Secreted</location>
    </subcellularLocation>
</comment>
<comment type="PTM">
    <text evidence="1">Proapolipoprotein C-II is synthesized as a sialic acid containing glycoprotein which is subsequently desialylated prior to its proteolytic processing.</text>
</comment>
<comment type="PTM">
    <text evidence="1">Proapolipoprotein C-II, the major form found in plasma undergoes proteolytic cleavage of its N-terminal hexapeptide to generate the mature form apolipoprotein C-II, which occurs as the minor form in plasma.</text>
</comment>
<comment type="similarity">
    <text evidence="3">Belongs to the apolipoprotein C2 family.</text>
</comment>
<feature type="signal peptide" evidence="2">
    <location>
        <begin position="1"/>
        <end position="22"/>
    </location>
</feature>
<feature type="chain" id="PRO_0000453994" description="Proapolipoprotein C-II">
    <location>
        <begin position="23"/>
        <end position="100"/>
    </location>
</feature>
<feature type="chain" id="PRO_0000453995" description="Apolipoprotein C-II" evidence="1">
    <location>
        <begin position="29"/>
        <end position="100"/>
    </location>
</feature>
<feature type="region of interest" description="Lipid binding" evidence="1">
    <location>
        <begin position="66"/>
        <end position="74"/>
    </location>
</feature>
<feature type="region of interest" description="Lipoprotein lipase cofactor" evidence="1">
    <location>
        <begin position="78"/>
        <end position="100"/>
    </location>
</feature>
<dbReference type="EMBL" id="LOJH01115970">
    <property type="status" value="NOT_ANNOTATED_CDS"/>
    <property type="molecule type" value="Genomic_DNA"/>
</dbReference>
<dbReference type="SMR" id="P0DUX7"/>
<dbReference type="GO" id="GO:0042627">
    <property type="term" value="C:chylomicron"/>
    <property type="evidence" value="ECO:0007669"/>
    <property type="project" value="UniProtKB-KW"/>
</dbReference>
<dbReference type="GO" id="GO:0034364">
    <property type="term" value="C:high-density lipoprotein particle"/>
    <property type="evidence" value="ECO:0007669"/>
    <property type="project" value="UniProtKB-KW"/>
</dbReference>
<dbReference type="GO" id="GO:0034362">
    <property type="term" value="C:low-density lipoprotein particle"/>
    <property type="evidence" value="ECO:0007669"/>
    <property type="project" value="UniProtKB-KW"/>
</dbReference>
<dbReference type="GO" id="GO:0034361">
    <property type="term" value="C:very-low-density lipoprotein particle"/>
    <property type="evidence" value="ECO:0007669"/>
    <property type="project" value="UniProtKB-KW"/>
</dbReference>
<dbReference type="GO" id="GO:0016004">
    <property type="term" value="F:phospholipase activator activity"/>
    <property type="evidence" value="ECO:0007669"/>
    <property type="project" value="TreeGrafter"/>
</dbReference>
<dbReference type="GO" id="GO:0043274">
    <property type="term" value="F:phospholipase binding"/>
    <property type="evidence" value="ECO:0007669"/>
    <property type="project" value="TreeGrafter"/>
</dbReference>
<dbReference type="GO" id="GO:0016042">
    <property type="term" value="P:lipid catabolic process"/>
    <property type="evidence" value="ECO:0007669"/>
    <property type="project" value="UniProtKB-KW"/>
</dbReference>
<dbReference type="GO" id="GO:0006869">
    <property type="term" value="P:lipid transport"/>
    <property type="evidence" value="ECO:0007669"/>
    <property type="project" value="UniProtKB-KW"/>
</dbReference>
<dbReference type="GO" id="GO:0060697">
    <property type="term" value="P:positive regulation of phospholipid catabolic process"/>
    <property type="evidence" value="ECO:0007669"/>
    <property type="project" value="TreeGrafter"/>
</dbReference>
<dbReference type="FunFam" id="1.10.1440.10:FF:000001">
    <property type="entry name" value="Apolipoprotein C-II"/>
    <property type="match status" value="1"/>
</dbReference>
<dbReference type="Gene3D" id="1.10.1440.10">
    <property type="entry name" value="Apolipoprotein C-II"/>
    <property type="match status" value="1"/>
</dbReference>
<dbReference type="InterPro" id="IPR008019">
    <property type="entry name" value="Apo-CII"/>
</dbReference>
<dbReference type="InterPro" id="IPR023121">
    <property type="entry name" value="ApoC-II_dom_sf"/>
</dbReference>
<dbReference type="PANTHER" id="PTHR16566">
    <property type="entry name" value="APOLIPOPROTEIN C-II"/>
    <property type="match status" value="1"/>
</dbReference>
<dbReference type="PANTHER" id="PTHR16566:SF0">
    <property type="entry name" value="APOLIPOPROTEIN C-II"/>
    <property type="match status" value="1"/>
</dbReference>
<dbReference type="Pfam" id="PF05355">
    <property type="entry name" value="Apo-CII"/>
    <property type="match status" value="1"/>
</dbReference>
<proteinExistence type="inferred from homology"/>
<reference key="1">
    <citation type="journal article" date="2016" name="Genome Res.">
        <title>Genomes of Ellobius species provide insight into the evolutionary dynamics of mammalian sex chromosomes.</title>
        <authorList>
            <person name="Mulugeta E."/>
            <person name="Wassenaar E."/>
            <person name="Sleddens-Linkels E."/>
            <person name="Van Ijcken W.F."/>
            <person name="Heard E."/>
            <person name="Grootegoed J.A."/>
            <person name="Just W."/>
            <person name="Gribnau J."/>
            <person name="Baarends W.M."/>
        </authorList>
    </citation>
    <scope>NUCLEOTIDE SEQUENCE [LARGE SCALE GENOMIC DNA]</scope>
    <source>
        <tissue>Liver</tissue>
    </source>
</reference>
<name>APOC2_ELLTL</name>
<evidence type="ECO:0000250" key="1">
    <source>
        <dbReference type="UniProtKB" id="P02655"/>
    </source>
</evidence>
<evidence type="ECO:0000255" key="2"/>
<evidence type="ECO:0000305" key="3"/>